<reference key="1">
    <citation type="journal article" date="1991" name="Genomics">
        <title>Isolation and characterization of two human H1 histone genes within clusters of core histone genes.</title>
        <authorList>
            <person name="Albig W."/>
            <person name="Kardalinou E."/>
            <person name="Drabent B."/>
            <person name="Zimmer A."/>
            <person name="Doenecke D."/>
        </authorList>
    </citation>
    <scope>NUCLEOTIDE SEQUENCE [GENOMIC DNA]</scope>
</reference>
<reference key="2">
    <citation type="journal article" date="2002" name="Genomics">
        <title>The human and mouse replication-dependent histone genes.</title>
        <authorList>
            <person name="Marzluff W.F."/>
            <person name="Gongidi P."/>
            <person name="Woods K.R."/>
            <person name="Jin J."/>
            <person name="Maltais L.J."/>
        </authorList>
    </citation>
    <scope>NUCLEOTIDE SEQUENCE [GENOMIC DNA]</scope>
</reference>
<reference key="3">
    <citation type="journal article" date="2004" name="Genome Res.">
        <title>The status, quality, and expansion of the NIH full-length cDNA project: the Mammalian Gene Collection (MGC).</title>
        <authorList>
            <consortium name="The MGC Project Team"/>
        </authorList>
    </citation>
    <scope>NUCLEOTIDE SEQUENCE [LARGE SCALE MRNA]</scope>
</reference>
<reference key="4">
    <citation type="journal article" date="2002" name="J. Biol. Chem.">
        <title>Global regulation of post-translational modifications on core histones.</title>
        <authorList>
            <person name="Galasinski S.C."/>
            <person name="Louie D.F."/>
            <person name="Gloor K.K."/>
            <person name="Resing K.A."/>
            <person name="Ahn N.G."/>
        </authorList>
    </citation>
    <scope>IDENTIFICATION BY MASS SPECTROMETRY</scope>
    <scope>METHYLATION</scope>
    <scope>PHOSPHORYLATION</scope>
</reference>
<reference key="5">
    <citation type="journal article" date="2003" name="Cell">
        <title>Apoptotic phosphorylation of histone H2B is mediated by mammalian sterile twenty kinase.</title>
        <authorList>
            <person name="Cheung W.L."/>
            <person name="Ajiro K."/>
            <person name="Samejima K."/>
            <person name="Kloc M."/>
            <person name="Cheung P."/>
            <person name="Mizzen C.A."/>
            <person name="Beeser A."/>
            <person name="Etkin L.D."/>
            <person name="Chernoff J."/>
            <person name="Earnshaw W.C."/>
            <person name="Allis C.D."/>
        </authorList>
    </citation>
    <scope>PHOSPHORYLATION AT SER-15</scope>
</reference>
<reference key="6">
    <citation type="journal article" date="2005" name="Mol. Cell">
        <title>Monoubiquitination of human histone H2B: the factors involved and their roles in HOX gene regulation.</title>
        <authorList>
            <person name="Zhu B."/>
            <person name="Zheng Y."/>
            <person name="Pham A.-D."/>
            <person name="Mandal S.S."/>
            <person name="Erdjument-Bromage H."/>
            <person name="Tempst P."/>
            <person name="Reinberg D."/>
        </authorList>
    </citation>
    <scope>UBIQUITINATION AT LYS-121</scope>
</reference>
<reference key="7">
    <citation type="journal article" date="2005" name="Mol. Cell. Biochem.">
        <title>Inhibition of core histones acetylation by carcinogenic nickel(II).</title>
        <authorList>
            <person name="Golebiowski F."/>
            <person name="Kasprzak K.S."/>
        </authorList>
    </citation>
    <scope>ACETYLATION AT LYS-6; LYS-13; LYS-16 AND LYS-21</scope>
</reference>
<reference key="8">
    <citation type="journal article" date="2006" name="Cell">
        <title>Histone H2B monoubiquitination functions cooperatively with FACT to regulate elongation by RNA polymerase II.</title>
        <authorList>
            <person name="Pavri R."/>
            <person name="Zhu B."/>
            <person name="Li G."/>
            <person name="Trojer P."/>
            <person name="Mandal S."/>
            <person name="Shilatifard A."/>
            <person name="Reinberg D."/>
        </authorList>
    </citation>
    <scope>UBIQUITINATION AT LYS-121</scope>
</reference>
<reference key="9">
    <citation type="journal article" date="2009" name="Science">
        <title>Lysine acetylation targets protein complexes and co-regulates major cellular functions.</title>
        <authorList>
            <person name="Choudhary C."/>
            <person name="Kumar C."/>
            <person name="Gnad F."/>
            <person name="Nielsen M.L."/>
            <person name="Rehman M."/>
            <person name="Walther T.C."/>
            <person name="Olsen J.V."/>
            <person name="Mann M."/>
        </authorList>
    </citation>
    <scope>ACETYLATION [LARGE SCALE ANALYSIS] AT LYS-13; LYS-16; LYS-17; LYS-21 AND LYS-24</scope>
    <scope>IDENTIFICATION BY MASS SPECTROMETRY [LARGE SCALE ANALYSIS]</scope>
</reference>
<reference key="10">
    <citation type="journal article" date="2011" name="Cell">
        <title>Identification of 67 histone marks and histone lysine crotonylation as a new type of histone modification.</title>
        <authorList>
            <person name="Tan M."/>
            <person name="Luo H."/>
            <person name="Lee S."/>
            <person name="Jin F."/>
            <person name="Yang J.S."/>
            <person name="Montellier E."/>
            <person name="Buchou T."/>
            <person name="Cheng Z."/>
            <person name="Rousseaux S."/>
            <person name="Rajagopal N."/>
            <person name="Lu Z."/>
            <person name="Ye Z."/>
            <person name="Zhu Q."/>
            <person name="Wysocka J."/>
            <person name="Ye Y."/>
            <person name="Khochbin S."/>
            <person name="Ren B."/>
            <person name="Zhao Y."/>
        </authorList>
    </citation>
    <scope>CROTONYLATION AT LYS-6; LYS-12; LYS-13; LYS-16; LYS-17; LYS-21; LYS-24 AND LYS-35</scope>
</reference>
<reference key="11">
    <citation type="journal article" date="2011" name="Mol. Cell">
        <title>The RING finger protein MSL2 in the MOF complex is an E3 ubiquitin ligase for H2B K34 and is involved in crosstalk with H3 K4 and K79 methylation.</title>
        <authorList>
            <person name="Wu L."/>
            <person name="Zee B.M."/>
            <person name="Wang Y."/>
            <person name="Garcia B.A."/>
            <person name="Dou Y."/>
        </authorList>
    </citation>
    <scope>UBIQUITINATION AT LYS-35</scope>
</reference>
<reference key="12">
    <citation type="journal article" date="2012" name="Mol. Cell. Proteomics">
        <title>Lysine succinylation and lysine malonylation in histones.</title>
        <authorList>
            <person name="Xie Z."/>
            <person name="Dai J."/>
            <person name="Dai L."/>
            <person name="Tan M."/>
            <person name="Cheng Z."/>
            <person name="Wu Y."/>
            <person name="Boeke J.D."/>
            <person name="Zhao Y."/>
        </authorList>
    </citation>
    <scope>SUCCINYLATION AT LYS-35; LYS-117 AND LYS-121</scope>
    <scope>MALONYLATION AT LYS-117</scope>
</reference>
<reference key="13">
    <citation type="journal article" date="2013" name="Genes Dev.">
        <title>USP49 deubiquitinates histone H2B and regulates cotranscriptional pre-mRNA splicing.</title>
        <authorList>
            <person name="Zhang Z."/>
            <person name="Jones A."/>
            <person name="Joo H.Y."/>
            <person name="Zhou D."/>
            <person name="Cao Y."/>
            <person name="Chen S."/>
            <person name="Erdjument-Bromage H."/>
            <person name="Renfrow M."/>
            <person name="He H."/>
            <person name="Tempst P."/>
            <person name="Townes T.M."/>
            <person name="Giles K.E."/>
            <person name="Ma L."/>
            <person name="Wang H."/>
        </authorList>
    </citation>
    <scope>UBIQUITINATION</scope>
    <scope>DEUBIQUITINATION BY USP49</scope>
</reference>
<reference key="14">
    <citation type="journal article" date="2014" name="Nat. Chem. Biol.">
        <title>Lysine 2-hydroxyisobutyrylation is a widely distributed active histone mark.</title>
        <authorList>
            <person name="Dai L."/>
            <person name="Peng C."/>
            <person name="Montellier E."/>
            <person name="Lu Z."/>
            <person name="Chen Y."/>
            <person name="Ishii H."/>
            <person name="Debernardi A."/>
            <person name="Buchou T."/>
            <person name="Rousseaux S."/>
            <person name="Jin F."/>
            <person name="Sabari B.R."/>
            <person name="Deng Z."/>
            <person name="Allis C.D."/>
            <person name="Ren B."/>
            <person name="Khochbin S."/>
            <person name="Zhao Y."/>
        </authorList>
    </citation>
    <scope>HYDROXYBUTYRYLATION AT LYS-6; LYS-13; LYS-21; LYS-24; LYS-25; LYS-35; LYS-44; LYS-47; LYS-58; LYS-86; LYS-109; LYS-117 AND LYS-121</scope>
</reference>
<reference key="15">
    <citation type="journal article" date="2016" name="Mol. Cell">
        <title>Dynamic competing histone H4 K5K8 acetylation and butyrylation are hallmarks of highly active gene promoters.</title>
        <authorList>
            <person name="Goudarzi A."/>
            <person name="Zhang D."/>
            <person name="Huang H."/>
            <person name="Barral S."/>
            <person name="Kwon O.K."/>
            <person name="Qi S."/>
            <person name="Tang Z."/>
            <person name="Buchou T."/>
            <person name="Vitte A.L."/>
            <person name="He T."/>
            <person name="Cheng Z."/>
            <person name="Montellier E."/>
            <person name="Gaucher J."/>
            <person name="Curtet S."/>
            <person name="Debernardi A."/>
            <person name="Charbonnier G."/>
            <person name="Puthier D."/>
            <person name="Petosa C."/>
            <person name="Panne D."/>
            <person name="Rousseaux S."/>
            <person name="Roeder R.G."/>
            <person name="Zhao Y."/>
            <person name="Khochbin S."/>
        </authorList>
    </citation>
    <scope>BUTYRYLATION AT LYS-6 AND LYS-21</scope>
</reference>
<reference key="16">
    <citation type="journal article" date="2016" name="Mol. Cell">
        <title>Metabolic regulation of gene expression by histone lysine beta-hydroxybutyrylation.</title>
        <authorList>
            <person name="Xie Z."/>
            <person name="Zhang D."/>
            <person name="Chung D."/>
            <person name="Tang Z."/>
            <person name="Huang H."/>
            <person name="Dai L."/>
            <person name="Qi S."/>
            <person name="Li J."/>
            <person name="Colak G."/>
            <person name="Chen Y."/>
            <person name="Xia C."/>
            <person name="Peng C."/>
            <person name="Ruan H."/>
            <person name="Kirkey M."/>
            <person name="Wang D."/>
            <person name="Jensen L.M."/>
            <person name="Kwon O.K."/>
            <person name="Lee S."/>
            <person name="Pletcher S.D."/>
            <person name="Tan M."/>
            <person name="Lombard D.B."/>
            <person name="White K.P."/>
            <person name="Zhao H."/>
            <person name="Li J."/>
            <person name="Roeder R.G."/>
            <person name="Yang X."/>
            <person name="Zhao Y."/>
        </authorList>
    </citation>
    <scope>HYDROXYBUTYRYLATION AT LYS-6; LYS-12; LYS-17; LYS-21; LYS-35; LYS-86; LYS-117 AND LYS-121</scope>
</reference>
<reference key="17">
    <citation type="journal article" date="2016" name="Nat. Commun.">
        <title>PARP3 is a sensor of nicked nucleosomes and monoribosylates histone H2B(Glu2).</title>
        <authorList>
            <person name="Grundy G.J."/>
            <person name="Polo L.M."/>
            <person name="Zeng Z."/>
            <person name="Rulten S.L."/>
            <person name="Hoch N.C."/>
            <person name="Paomephan P."/>
            <person name="Xu Y."/>
            <person name="Sweet S.M."/>
            <person name="Thorne A.W."/>
            <person name="Oliver A.W."/>
            <person name="Matthews S.J."/>
            <person name="Pearl L.H."/>
            <person name="Caldecott K.W."/>
        </authorList>
    </citation>
    <scope>ADP-RIBOSYLATION AT GLU-3</scope>
</reference>
<reference key="18">
    <citation type="journal article" date="2019" name="Mol. Cell">
        <title>Glutarylation of histone H4 lysine 91 regulates chromatin dynamics.</title>
        <authorList>
            <person name="Bao X."/>
            <person name="Liu Z."/>
            <person name="Zhang W."/>
            <person name="Gladysz K."/>
            <person name="Fung Y.M.E."/>
            <person name="Tian G."/>
            <person name="Xiong Y."/>
            <person name="Wong J.W.H."/>
            <person name="Yuen K.W.Y."/>
            <person name="Li X.D."/>
        </authorList>
    </citation>
    <scope>GLUTARYLATION AT LYS-17; LYS-35; LYS-44; LYS-47; LYS-109; LYS-117 AND LYS-121</scope>
</reference>
<reference key="19">
    <citation type="journal article" date="2019" name="Nature">
        <title>Metabolic regulation of gene expression by histone lactylation.</title>
        <authorList>
            <person name="Zhang D."/>
            <person name="Tang Z."/>
            <person name="Huang H."/>
            <person name="Zhou G."/>
            <person name="Cui C."/>
            <person name="Weng Y."/>
            <person name="Liu W."/>
            <person name="Kim S."/>
            <person name="Lee S."/>
            <person name="Perez-Neut M."/>
            <person name="Ding J."/>
            <person name="Czyz D."/>
            <person name="Hu R."/>
            <person name="Ye Z."/>
            <person name="He M."/>
            <person name="Zheng Y.G."/>
            <person name="Shuman H.A."/>
            <person name="Dai L."/>
            <person name="Ren B."/>
            <person name="Roeder R.G."/>
            <person name="Becker L."/>
            <person name="Zhao Y."/>
        </authorList>
    </citation>
    <scope>LACTYLATION AT LYS-6; LYS-12; LYS-16; LYS-17; LYS-21; LYS-24; LYS-44; LYS-86; LYS-109; LYS-117 AND LYS-121</scope>
</reference>
<reference key="20">
    <citation type="journal article" date="2021" name="Elife">
        <title>Serine ADP-ribosylation marks nucleosomes for ALC1-dependent chromatin remodeling.</title>
        <authorList>
            <person name="Mohapatra J."/>
            <person name="Tashiro K."/>
            <person name="Beckner R.L."/>
            <person name="Sierra J."/>
            <person name="Kilgore J.A."/>
            <person name="Williams N.S."/>
            <person name="Liszczak G."/>
        </authorList>
    </citation>
    <scope>ADP-RIBOSYLATION AT SER-7</scope>
</reference>
<evidence type="ECO:0000250" key="1">
    <source>
        <dbReference type="UniProtKB" id="P23527"/>
    </source>
</evidence>
<evidence type="ECO:0000250" key="2">
    <source>
        <dbReference type="UniProtKB" id="P58876"/>
    </source>
</evidence>
<evidence type="ECO:0000250" key="3">
    <source>
        <dbReference type="UniProtKB" id="P62807"/>
    </source>
</evidence>
<evidence type="ECO:0000250" key="4">
    <source>
        <dbReference type="UniProtKB" id="Q00729"/>
    </source>
</evidence>
<evidence type="ECO:0000250" key="5">
    <source>
        <dbReference type="UniProtKB" id="Q5QNW6"/>
    </source>
</evidence>
<evidence type="ECO:0000250" key="6">
    <source>
        <dbReference type="UniProtKB" id="Q64475"/>
    </source>
</evidence>
<evidence type="ECO:0000250" key="7">
    <source>
        <dbReference type="UniProtKB" id="Q6ZWY9"/>
    </source>
</evidence>
<evidence type="ECO:0000250" key="8">
    <source>
        <dbReference type="UniProtKB" id="Q96A08"/>
    </source>
</evidence>
<evidence type="ECO:0000256" key="9">
    <source>
        <dbReference type="SAM" id="MobiDB-lite"/>
    </source>
</evidence>
<evidence type="ECO:0000269" key="10">
    <source>
    </source>
</evidence>
<evidence type="ECO:0000269" key="11">
    <source>
    </source>
</evidence>
<evidence type="ECO:0000269" key="12">
    <source>
    </source>
</evidence>
<evidence type="ECO:0000269" key="13">
    <source>
    </source>
</evidence>
<evidence type="ECO:0000269" key="14">
    <source>
    </source>
</evidence>
<evidence type="ECO:0000269" key="15">
    <source>
    </source>
</evidence>
<evidence type="ECO:0000269" key="16">
    <source>
    </source>
</evidence>
<evidence type="ECO:0000269" key="17">
    <source>
    </source>
</evidence>
<evidence type="ECO:0000269" key="18">
    <source>
    </source>
</evidence>
<evidence type="ECO:0000269" key="19">
    <source>
    </source>
</evidence>
<evidence type="ECO:0000269" key="20">
    <source>
    </source>
</evidence>
<evidence type="ECO:0000269" key="21">
    <source>
    </source>
</evidence>
<evidence type="ECO:0000269" key="22">
    <source>
    </source>
</evidence>
<evidence type="ECO:0000269" key="23">
    <source>
    </source>
</evidence>
<evidence type="ECO:0000269" key="24">
    <source>
    </source>
</evidence>
<evidence type="ECO:0000305" key="25"/>
<evidence type="ECO:0000312" key="26">
    <source>
        <dbReference type="HGNC" id="HGNC:4751"/>
    </source>
</evidence>
<evidence type="ECO:0007744" key="27">
    <source>
    </source>
</evidence>
<evidence type="ECO:0007829" key="28">
    <source>
        <dbReference type="PDB" id="9FGQ"/>
    </source>
</evidence>
<feature type="initiator methionine" description="Removed" evidence="1">
    <location>
        <position position="1"/>
    </location>
</feature>
<feature type="chain" id="PRO_0000071832" description="Histone H2B type 1-B">
    <location>
        <begin position="2"/>
        <end position="126"/>
    </location>
</feature>
<feature type="region of interest" description="Disordered" evidence="9">
    <location>
        <begin position="1"/>
        <end position="35"/>
    </location>
</feature>
<feature type="compositionally biased region" description="Low complexity" evidence="9">
    <location>
        <begin position="1"/>
        <end position="12"/>
    </location>
</feature>
<feature type="modified residue" description="N-acetylproline" evidence="1">
    <location>
        <position position="2"/>
    </location>
</feature>
<feature type="modified residue" description="ADP-ribosyl glutamic acid" evidence="21">
    <location>
        <position position="3"/>
    </location>
</feature>
<feature type="modified residue" description="N6-(2-hydroxyisobutyryl)lysine; alternate" evidence="18">
    <location>
        <position position="6"/>
    </location>
</feature>
<feature type="modified residue" description="N6-(beta-hydroxybutyryl)lysine; alternate" evidence="20">
    <location>
        <position position="6"/>
    </location>
</feature>
<feature type="modified residue" description="N6-acetyllysine; alternate" evidence="12">
    <location>
        <position position="6"/>
    </location>
</feature>
<feature type="modified residue" description="N6-butyryllysine; alternate" evidence="19">
    <location>
        <position position="6"/>
    </location>
</feature>
<feature type="modified residue" description="N6-crotonyllysine; alternate" evidence="16">
    <location>
        <position position="6"/>
    </location>
</feature>
<feature type="modified residue" description="N6-lactoyllysine; alternate" evidence="23">
    <location>
        <position position="6"/>
    </location>
</feature>
<feature type="modified residue" description="ADP-ribosylserine" evidence="24">
    <location>
        <position position="7"/>
    </location>
</feature>
<feature type="modified residue" description="N6-(beta-hydroxybutyryl)lysine; alternate" evidence="20">
    <location>
        <position position="12"/>
    </location>
</feature>
<feature type="modified residue" description="N6-acetyllysine; alternate" evidence="6">
    <location>
        <position position="12"/>
    </location>
</feature>
<feature type="modified residue" description="N6-crotonyllysine; alternate" evidence="16">
    <location>
        <position position="12"/>
    </location>
</feature>
<feature type="modified residue" description="N6-lactoyllysine; alternate" evidence="23">
    <location>
        <position position="12"/>
    </location>
</feature>
<feature type="modified residue" description="N6-(2-hydroxyisobutyryl)lysine; alternate" evidence="18">
    <location>
        <position position="13"/>
    </location>
</feature>
<feature type="modified residue" description="N6-acetyllysine; alternate" evidence="12 27">
    <location>
        <position position="13"/>
    </location>
</feature>
<feature type="modified residue" description="N6-crotonyllysine; alternate" evidence="16">
    <location>
        <position position="13"/>
    </location>
</feature>
<feature type="modified residue" description="Phosphoserine; by STK4/MST1" evidence="11">
    <location>
        <position position="15"/>
    </location>
</feature>
<feature type="modified residue" description="N6-acetyllysine; alternate" evidence="12 27">
    <location>
        <position position="16"/>
    </location>
</feature>
<feature type="modified residue" description="N6-crotonyllysine; alternate" evidence="16">
    <location>
        <position position="16"/>
    </location>
</feature>
<feature type="modified residue" description="N6-lactoyllysine; alternate" evidence="23">
    <location>
        <position position="16"/>
    </location>
</feature>
<feature type="modified residue" description="N6-(beta-hydroxybutyryl)lysine; alternate" evidence="20">
    <location>
        <position position="17"/>
    </location>
</feature>
<feature type="modified residue" description="N6-acetyllysine; alternate" evidence="27">
    <location>
        <position position="17"/>
    </location>
</feature>
<feature type="modified residue" description="N6-crotonyllysine; alternate" evidence="16">
    <location>
        <position position="17"/>
    </location>
</feature>
<feature type="modified residue" description="N6-glutaryllysine; alternate" evidence="22">
    <location>
        <position position="17"/>
    </location>
</feature>
<feature type="modified residue" description="N6-lactoyllysine; alternate" evidence="23">
    <location>
        <position position="17"/>
    </location>
</feature>
<feature type="modified residue" description="N6-(2-hydroxyisobutyryl)lysine; alternate" evidence="18">
    <location>
        <position position="21"/>
    </location>
</feature>
<feature type="modified residue" description="N6-(beta-hydroxybutyryl)lysine; alternate" evidence="20">
    <location>
        <position position="21"/>
    </location>
</feature>
<feature type="modified residue" description="N6-acetyllysine; alternate" evidence="12 27">
    <location>
        <position position="21"/>
    </location>
</feature>
<feature type="modified residue" description="N6-butyryllysine; alternate" evidence="19">
    <location>
        <position position="21"/>
    </location>
</feature>
<feature type="modified residue" description="N6-crotonyllysine; alternate" evidence="16">
    <location>
        <position position="21"/>
    </location>
</feature>
<feature type="modified residue" description="N6-lactoyllysine; alternate" evidence="23">
    <location>
        <position position="21"/>
    </location>
</feature>
<feature type="modified residue" description="N6-(2-hydroxyisobutyryl)lysine; alternate" evidence="18">
    <location>
        <position position="24"/>
    </location>
</feature>
<feature type="modified residue" description="N6-acetyllysine; alternate" evidence="27">
    <location>
        <position position="24"/>
    </location>
</feature>
<feature type="modified residue" description="N6-crotonyllysine; alternate" evidence="16">
    <location>
        <position position="24"/>
    </location>
</feature>
<feature type="modified residue" description="N6-lactoyllysine; alternate" evidence="23">
    <location>
        <position position="24"/>
    </location>
</feature>
<feature type="modified residue" description="N6-(2-hydroxyisobutyryl)lysine" evidence="18">
    <location>
        <position position="25"/>
    </location>
</feature>
<feature type="modified residue" description="N6-(2-hydroxyisobutyryl)lysine; alternate" evidence="18">
    <location>
        <position position="35"/>
    </location>
</feature>
<feature type="modified residue" description="N6-(beta-hydroxybutyryl)lysine; alternate" evidence="20">
    <location>
        <position position="35"/>
    </location>
</feature>
<feature type="modified residue" description="N6-crotonyllysine; alternate" evidence="16">
    <location>
        <position position="35"/>
    </location>
</feature>
<feature type="modified residue" description="N6-glutaryllysine; alternate" evidence="22">
    <location>
        <position position="35"/>
    </location>
</feature>
<feature type="modified residue" description="N6-succinyllysine; alternate" evidence="17">
    <location>
        <position position="35"/>
    </location>
</feature>
<feature type="modified residue" description="PolyADP-ribosyl glutamic acid" evidence="6">
    <location>
        <position position="36"/>
    </location>
</feature>
<feature type="modified residue" description="Phosphoserine; by AMPK" evidence="6">
    <location>
        <position position="37"/>
    </location>
</feature>
<feature type="modified residue" description="N6-(2-hydroxyisobutyryl)lysine; alternate" evidence="18">
    <location>
        <position position="44"/>
    </location>
</feature>
<feature type="modified residue" description="N6-glutaryllysine; alternate" evidence="22">
    <location>
        <position position="44"/>
    </location>
</feature>
<feature type="modified residue" description="N6-lactoyllysine; alternate" evidence="23">
    <location>
        <position position="44"/>
    </location>
</feature>
<feature type="modified residue" description="N6-(2-hydroxyisobutyryl)lysine; alternate" evidence="18">
    <location>
        <position position="47"/>
    </location>
</feature>
<feature type="modified residue" description="N6-glutaryllysine; alternate" evidence="22">
    <location>
        <position position="47"/>
    </location>
</feature>
<feature type="modified residue" description="N6-methyllysine; alternate" evidence="3">
    <location>
        <position position="47"/>
    </location>
</feature>
<feature type="modified residue" description="N6,N6-dimethyllysine; alternate" evidence="3">
    <location>
        <position position="58"/>
    </location>
</feature>
<feature type="modified residue" description="N6-(2-hydroxyisobutyryl)lysine; alternate" evidence="18">
    <location>
        <position position="58"/>
    </location>
</feature>
<feature type="modified residue" description="Dimethylated arginine" evidence="8">
    <location>
        <position position="80"/>
    </location>
</feature>
<feature type="modified residue" description="N6,N6,N6-trimethyllysine; alternate" evidence="8">
    <location>
        <position position="86"/>
    </location>
</feature>
<feature type="modified residue" description="N6-(2-hydroxyisobutyryl)lysine; alternate" evidence="18">
    <location>
        <position position="86"/>
    </location>
</feature>
<feature type="modified residue" description="N6-(beta-hydroxybutyryl)lysine; alternate" evidence="20">
    <location>
        <position position="86"/>
    </location>
</feature>
<feature type="modified residue" description="N6-acetyllysine; alternate" evidence="8">
    <location>
        <position position="86"/>
    </location>
</feature>
<feature type="modified residue" description="N6-lactoyllysine; alternate" evidence="23">
    <location>
        <position position="86"/>
    </location>
</feature>
<feature type="modified residue" description="Omega-N-methylarginine" evidence="8">
    <location>
        <position position="87"/>
    </location>
</feature>
<feature type="modified residue" description="Omega-N-methylarginine" evidence="8">
    <location>
        <position position="93"/>
    </location>
</feature>
<feature type="modified residue" description="N6-(2-hydroxyisobutyryl)lysine; alternate" evidence="18">
    <location>
        <position position="109"/>
    </location>
</feature>
<feature type="modified residue" description="N6-glutaryllysine; alternate" evidence="22">
    <location>
        <position position="109"/>
    </location>
</feature>
<feature type="modified residue" description="N6-lactoyllysine; alternate" evidence="23">
    <location>
        <position position="109"/>
    </location>
</feature>
<feature type="modified residue" description="N6-methyllysine; alternate" evidence="3">
    <location>
        <position position="109"/>
    </location>
</feature>
<feature type="modified residue" description="Phosphothreonine" evidence="4">
    <location>
        <position position="116"/>
    </location>
</feature>
<feature type="modified residue" description="N6-(2-hydroxyisobutyryl)lysine; alternate" evidence="18">
    <location>
        <position position="117"/>
    </location>
</feature>
<feature type="modified residue" description="N6-(beta-hydroxybutyryl)lysine; alternate" evidence="20">
    <location>
        <position position="117"/>
    </location>
</feature>
<feature type="modified residue" description="N6-glutaryllysine; alternate" evidence="22">
    <location>
        <position position="117"/>
    </location>
</feature>
<feature type="modified residue" description="N6-lactoyllysine; alternate" evidence="23">
    <location>
        <position position="117"/>
    </location>
</feature>
<feature type="modified residue" description="N6-malonyllysine; alternate" evidence="17">
    <location>
        <position position="117"/>
    </location>
</feature>
<feature type="modified residue" description="N6-methylated lysine; alternate" evidence="4">
    <location>
        <position position="117"/>
    </location>
</feature>
<feature type="modified residue" description="N6-succinyllysine; alternate" evidence="17">
    <location>
        <position position="117"/>
    </location>
</feature>
<feature type="modified residue" description="N6-(2-hydroxyisobutyryl)lysine; alternate" evidence="18">
    <location>
        <position position="121"/>
    </location>
</feature>
<feature type="modified residue" description="N6-(beta-hydroxybutyryl)lysine; alternate" evidence="20">
    <location>
        <position position="121"/>
    </location>
</feature>
<feature type="modified residue" description="N6-glutaryllysine; alternate" evidence="22">
    <location>
        <position position="121"/>
    </location>
</feature>
<feature type="modified residue" description="N6-lactoyllysine; alternate" evidence="23">
    <location>
        <position position="121"/>
    </location>
</feature>
<feature type="modified residue" description="N6-succinyllysine; alternate" evidence="17">
    <location>
        <position position="121"/>
    </location>
</feature>
<feature type="glycosylation site" description="O-linked (GlcNAc) serine" evidence="3">
    <location>
        <position position="113"/>
    </location>
</feature>
<feature type="cross-link" description="Glycyl lysine isopeptide (Lys-Gly) (interchain with G-Cter in SUMO2); alternate" evidence="2">
    <location>
        <position position="6"/>
    </location>
</feature>
<feature type="cross-link" description="Glycyl lysine isopeptide (Lys-Gly) (interchain with G-Cter in SUMO2); alternate" evidence="5">
    <location>
        <position position="21"/>
    </location>
</feature>
<feature type="cross-link" description="Glycyl lysine isopeptide (Lys-Gly) (interchain with G-Cter in ubiquitin); alternate" evidence="15">
    <location>
        <position position="35"/>
    </location>
</feature>
<feature type="cross-link" description="Glycyl lysine isopeptide (Lys-Gly) (interchain with G-Cter in ubiquitin); alternate" evidence="13 14">
    <location>
        <position position="121"/>
    </location>
</feature>
<feature type="helix" evidence="28">
    <location>
        <begin position="39"/>
        <end position="49"/>
    </location>
</feature>
<feature type="helix" evidence="28">
    <location>
        <begin position="57"/>
        <end position="84"/>
    </location>
</feature>
<feature type="strand" evidence="28">
    <location>
        <begin position="88"/>
        <end position="90"/>
    </location>
</feature>
<feature type="helix" evidence="28">
    <location>
        <begin position="92"/>
        <end position="102"/>
    </location>
</feature>
<feature type="helix" evidence="28">
    <location>
        <begin position="106"/>
        <end position="124"/>
    </location>
</feature>
<proteinExistence type="evidence at protein level"/>
<gene>
    <name evidence="26" type="primary">H2BC3</name>
    <name type="synonym">H2BFF</name>
    <name evidence="26" type="synonym">HIST1H2BB</name>
</gene>
<organism>
    <name type="scientific">Homo sapiens</name>
    <name type="common">Human</name>
    <dbReference type="NCBI Taxonomy" id="9606"/>
    <lineage>
        <taxon>Eukaryota</taxon>
        <taxon>Metazoa</taxon>
        <taxon>Chordata</taxon>
        <taxon>Craniata</taxon>
        <taxon>Vertebrata</taxon>
        <taxon>Euteleostomi</taxon>
        <taxon>Mammalia</taxon>
        <taxon>Eutheria</taxon>
        <taxon>Euarchontoglires</taxon>
        <taxon>Primates</taxon>
        <taxon>Haplorrhini</taxon>
        <taxon>Catarrhini</taxon>
        <taxon>Hominidae</taxon>
        <taxon>Homo</taxon>
    </lineage>
</organism>
<protein>
    <recommendedName>
        <fullName>Histone H2B type 1-B</fullName>
    </recommendedName>
    <alternativeName>
        <fullName evidence="26">H2B-clustered histone 3</fullName>
    </alternativeName>
    <alternativeName>
        <fullName>Histone H2B.1</fullName>
    </alternativeName>
    <alternativeName>
        <fullName>Histone H2B.f</fullName>
        <shortName>H2B/f</shortName>
    </alternativeName>
</protein>
<keyword id="KW-0002">3D-structure</keyword>
<keyword id="KW-0007">Acetylation</keyword>
<keyword id="KW-0013">ADP-ribosylation</keyword>
<keyword id="KW-0158">Chromosome</keyword>
<keyword id="KW-0238">DNA-binding</keyword>
<keyword id="KW-0325">Glycoprotein</keyword>
<keyword id="KW-0379">Hydroxylation</keyword>
<keyword id="KW-1017">Isopeptide bond</keyword>
<keyword id="KW-0488">Methylation</keyword>
<keyword id="KW-0544">Nucleosome core</keyword>
<keyword id="KW-0539">Nucleus</keyword>
<keyword id="KW-0597">Phosphoprotein</keyword>
<keyword id="KW-1185">Reference proteome</keyword>
<keyword id="KW-0832">Ubl conjugation</keyword>
<dbReference type="EMBL" id="X57127">
    <property type="protein sequence ID" value="CAA40406.1"/>
    <property type="molecule type" value="Genomic_DNA"/>
</dbReference>
<dbReference type="EMBL" id="AF531285">
    <property type="protein sequence ID" value="AAN06685.1"/>
    <property type="molecule type" value="Genomic_DNA"/>
</dbReference>
<dbReference type="EMBL" id="BC096728">
    <property type="protein sequence ID" value="AAH96728.1"/>
    <property type="molecule type" value="mRNA"/>
</dbReference>
<dbReference type="CCDS" id="CCDS4575.1"/>
<dbReference type="PIR" id="I37445">
    <property type="entry name" value="I37445"/>
</dbReference>
<dbReference type="RefSeq" id="NP_066406.1">
    <property type="nucleotide sequence ID" value="NM_021062.3"/>
</dbReference>
<dbReference type="PDB" id="3X1S">
    <property type="method" value="X-ray"/>
    <property type="resolution" value="2.81 A"/>
    <property type="chains" value="D/H=2-126"/>
</dbReference>
<dbReference type="PDB" id="3X1U">
    <property type="method" value="X-ray"/>
    <property type="resolution" value="3.25 A"/>
    <property type="chains" value="D/H=3-126"/>
</dbReference>
<dbReference type="PDB" id="9C62">
    <property type="method" value="EM"/>
    <property type="resolution" value="5.28 A"/>
    <property type="chains" value="O=1-126"/>
</dbReference>
<dbReference type="PDB" id="9FGQ">
    <property type="method" value="EM"/>
    <property type="resolution" value="2.50 A"/>
    <property type="chains" value="D/H=1-126"/>
</dbReference>
<dbReference type="PDBsum" id="3X1S"/>
<dbReference type="PDBsum" id="3X1U"/>
<dbReference type="PDBsum" id="9C62"/>
<dbReference type="PDBsum" id="9FGQ"/>
<dbReference type="EMDB" id="EMD-18794"/>
<dbReference type="EMDB" id="EMD-45240"/>
<dbReference type="EMDB" id="EMD-50416"/>
<dbReference type="SMR" id="P33778"/>
<dbReference type="BioGRID" id="109271">
    <property type="interactions" value="425"/>
</dbReference>
<dbReference type="CORUM" id="P33778"/>
<dbReference type="DIP" id="DIP-47505N"/>
<dbReference type="FunCoup" id="P33778">
    <property type="interactions" value="1311"/>
</dbReference>
<dbReference type="IntAct" id="P33778">
    <property type="interactions" value="26"/>
</dbReference>
<dbReference type="MINT" id="P33778"/>
<dbReference type="STRING" id="9606.ENSP00000482674"/>
<dbReference type="GlyCosmos" id="P33778">
    <property type="glycosylation" value="4 sites, 2 glycans"/>
</dbReference>
<dbReference type="GlyGen" id="P33778">
    <property type="glycosylation" value="3 sites, 2 O-linked glycans (2 sites)"/>
</dbReference>
<dbReference type="iPTMnet" id="P33778"/>
<dbReference type="MetOSite" id="P33778"/>
<dbReference type="PhosphoSitePlus" id="P33778"/>
<dbReference type="SwissPalm" id="P33778"/>
<dbReference type="BioMuta" id="HIST1H2BB"/>
<dbReference type="DMDM" id="462236"/>
<dbReference type="jPOST" id="P33778"/>
<dbReference type="MassIVE" id="P33778"/>
<dbReference type="PaxDb" id="9606-ENSP00000482674"/>
<dbReference type="PeptideAtlas" id="P33778"/>
<dbReference type="ProteomicsDB" id="54927"/>
<dbReference type="Pumba" id="P33778"/>
<dbReference type="TopDownProteomics" id="P33778"/>
<dbReference type="Antibodypedia" id="72531">
    <property type="antibodies" value="243 antibodies from 26 providers"/>
</dbReference>
<dbReference type="DNASU" id="3018"/>
<dbReference type="Ensembl" id="ENST00000615966.2">
    <property type="protein sequence ID" value="ENSP00000482674.2"/>
    <property type="gene ID" value="ENSG00000276410.5"/>
</dbReference>
<dbReference type="Ensembl" id="ENST00000850571.1">
    <property type="protein sequence ID" value="ENSP00000520861.1"/>
    <property type="gene ID" value="ENSG00000276410.5"/>
</dbReference>
<dbReference type="GeneID" id="3018"/>
<dbReference type="KEGG" id="hsa:3018"/>
<dbReference type="MANE-Select" id="ENST00000615966.2">
    <property type="protein sequence ID" value="ENSP00000482674.2"/>
    <property type="RefSeq nucleotide sequence ID" value="NM_021062.3"/>
    <property type="RefSeq protein sequence ID" value="NP_066406.1"/>
</dbReference>
<dbReference type="UCSC" id="uc003nfu.4">
    <property type="organism name" value="human"/>
</dbReference>
<dbReference type="AGR" id="HGNC:4751"/>
<dbReference type="CTD" id="3018"/>
<dbReference type="DisGeNET" id="3018"/>
<dbReference type="GeneCards" id="H2BC3"/>
<dbReference type="HGNC" id="HGNC:4751">
    <property type="gene designation" value="H2BC3"/>
</dbReference>
<dbReference type="HPA" id="ENSG00000276410">
    <property type="expression patterns" value="Tissue enhanced (bone marrow, lymphoid tissue, testis)"/>
</dbReference>
<dbReference type="MIM" id="602803">
    <property type="type" value="gene"/>
</dbReference>
<dbReference type="neXtProt" id="NX_P33778"/>
<dbReference type="OpenTargets" id="ENSG00000276410"/>
<dbReference type="VEuPathDB" id="HostDB:ENSG00000276410"/>
<dbReference type="eggNOG" id="KOG1744">
    <property type="taxonomic scope" value="Eukaryota"/>
</dbReference>
<dbReference type="GeneTree" id="ENSGT01110000267152"/>
<dbReference type="InParanoid" id="P33778"/>
<dbReference type="OMA" id="HDISNRI"/>
<dbReference type="OrthoDB" id="9537006at2759"/>
<dbReference type="PAN-GO" id="P33778">
    <property type="GO annotations" value="2 GO annotations based on evolutionary models"/>
</dbReference>
<dbReference type="PhylomeDB" id="P33778"/>
<dbReference type="TreeFam" id="TF300212"/>
<dbReference type="PathwayCommons" id="P33778"/>
<dbReference type="Reactome" id="R-HSA-110328">
    <property type="pathway name" value="Recognition and association of DNA glycosylase with site containing an affected pyrimidine"/>
</dbReference>
<dbReference type="Reactome" id="R-HSA-110329">
    <property type="pathway name" value="Cleavage of the damaged pyrimidine"/>
</dbReference>
<dbReference type="Reactome" id="R-HSA-110330">
    <property type="pathway name" value="Recognition and association of DNA glycosylase with site containing an affected purine"/>
</dbReference>
<dbReference type="Reactome" id="R-HSA-110331">
    <property type="pathway name" value="Cleavage of the damaged purine"/>
</dbReference>
<dbReference type="Reactome" id="R-HSA-1221632">
    <property type="pathway name" value="Meiotic synapsis"/>
</dbReference>
<dbReference type="Reactome" id="R-HSA-171306">
    <property type="pathway name" value="Packaging Of Telomere Ends"/>
</dbReference>
<dbReference type="Reactome" id="R-HSA-1912408">
    <property type="pathway name" value="Pre-NOTCH Transcription and Translation"/>
</dbReference>
<dbReference type="Reactome" id="R-HSA-201722">
    <property type="pathway name" value="Formation of the beta-catenin:TCF transactivating complex"/>
</dbReference>
<dbReference type="Reactome" id="R-HSA-212300">
    <property type="pathway name" value="PRC2 methylates histones and DNA"/>
</dbReference>
<dbReference type="Reactome" id="R-HSA-2299718">
    <property type="pathway name" value="Condensation of Prophase Chromosomes"/>
</dbReference>
<dbReference type="Reactome" id="R-HSA-2559580">
    <property type="pathway name" value="Oxidative Stress Induced Senescence"/>
</dbReference>
<dbReference type="Reactome" id="R-HSA-2559582">
    <property type="pathway name" value="Senescence-Associated Secretory Phenotype (SASP)"/>
</dbReference>
<dbReference type="Reactome" id="R-HSA-2559586">
    <property type="pathway name" value="DNA Damage/Telomere Stress Induced Senescence"/>
</dbReference>
<dbReference type="Reactome" id="R-HSA-3214815">
    <property type="pathway name" value="HDACs deacetylate histones"/>
</dbReference>
<dbReference type="Reactome" id="R-HSA-3214847">
    <property type="pathway name" value="HATs acetylate histones"/>
</dbReference>
<dbReference type="Reactome" id="R-HSA-427359">
    <property type="pathway name" value="SIRT1 negatively regulates rRNA expression"/>
</dbReference>
<dbReference type="Reactome" id="R-HSA-427389">
    <property type="pathway name" value="ERCC6 (CSB) and EHMT2 (G9a) positively regulate rRNA expression"/>
</dbReference>
<dbReference type="Reactome" id="R-HSA-427413">
    <property type="pathway name" value="NoRC negatively regulates rRNA expression"/>
</dbReference>
<dbReference type="Reactome" id="R-HSA-5250924">
    <property type="pathway name" value="B-WICH complex positively regulates rRNA expression"/>
</dbReference>
<dbReference type="Reactome" id="R-HSA-5334118">
    <property type="pathway name" value="DNA methylation"/>
</dbReference>
<dbReference type="Reactome" id="R-HSA-5578749">
    <property type="pathway name" value="Transcriptional regulation by small RNAs"/>
</dbReference>
<dbReference type="Reactome" id="R-HSA-5617472">
    <property type="pathway name" value="Activation of anterior HOX genes in hindbrain development during early embryogenesis"/>
</dbReference>
<dbReference type="Reactome" id="R-HSA-5625886">
    <property type="pathway name" value="Activated PKN1 stimulates transcription of AR (androgen receptor) regulated genes KLK2 and KLK3"/>
</dbReference>
<dbReference type="Reactome" id="R-HSA-5689880">
    <property type="pathway name" value="Ub-specific processing proteases"/>
</dbReference>
<dbReference type="Reactome" id="R-HSA-5693565">
    <property type="pathway name" value="Recruitment and ATM-mediated phosphorylation of repair and signaling proteins at DNA double strand breaks"/>
</dbReference>
<dbReference type="Reactome" id="R-HSA-5693571">
    <property type="pathway name" value="Nonhomologous End-Joining (NHEJ)"/>
</dbReference>
<dbReference type="Reactome" id="R-HSA-5693607">
    <property type="pathway name" value="Processing of DNA double-strand break ends"/>
</dbReference>
<dbReference type="Reactome" id="R-HSA-606279">
    <property type="pathway name" value="Deposition of new CENPA-containing nucleosomes at the centromere"/>
</dbReference>
<dbReference type="Reactome" id="R-HSA-68616">
    <property type="pathway name" value="Assembly of the ORC complex at the origin of replication"/>
</dbReference>
<dbReference type="Reactome" id="R-HSA-69473">
    <property type="pathway name" value="G2/M DNA damage checkpoint"/>
</dbReference>
<dbReference type="Reactome" id="R-HSA-73728">
    <property type="pathway name" value="RNA Polymerase I Promoter Opening"/>
</dbReference>
<dbReference type="Reactome" id="R-HSA-73772">
    <property type="pathway name" value="RNA Polymerase I Promoter Escape"/>
</dbReference>
<dbReference type="Reactome" id="R-HSA-8866654">
    <property type="pathway name" value="E3 ubiquitin ligases ubiquitinate target proteins"/>
</dbReference>
<dbReference type="Reactome" id="R-HSA-8936459">
    <property type="pathway name" value="RUNX1 regulates genes involved in megakaryocyte differentiation and platelet function"/>
</dbReference>
<dbReference type="Reactome" id="R-HSA-8939236">
    <property type="pathway name" value="RUNX1 regulates transcription of genes involved in differentiation of HSCs"/>
</dbReference>
<dbReference type="Reactome" id="R-HSA-9018519">
    <property type="pathway name" value="Estrogen-dependent gene expression"/>
</dbReference>
<dbReference type="Reactome" id="R-HSA-912446">
    <property type="pathway name" value="Meiotic recombination"/>
</dbReference>
<dbReference type="Reactome" id="R-HSA-9609690">
    <property type="pathway name" value="HCMV Early Events"/>
</dbReference>
<dbReference type="Reactome" id="R-HSA-9610379">
    <property type="pathway name" value="HCMV Late Events"/>
</dbReference>
<dbReference type="Reactome" id="R-HSA-9616222">
    <property type="pathway name" value="Transcriptional regulation of granulopoiesis"/>
</dbReference>
<dbReference type="Reactome" id="R-HSA-9670095">
    <property type="pathway name" value="Inhibition of DNA recombination at telomere"/>
</dbReference>
<dbReference type="Reactome" id="R-HSA-9710421">
    <property type="pathway name" value="Defective pyroptosis"/>
</dbReference>
<dbReference type="Reactome" id="R-HSA-977225">
    <property type="pathway name" value="Amyloid fiber formation"/>
</dbReference>
<dbReference type="Reactome" id="R-HSA-9821002">
    <property type="pathway name" value="Chromatin modifications during the maternal to zygotic transition (MZT)"/>
</dbReference>
<dbReference type="Reactome" id="R-HSA-9821993">
    <property type="pathway name" value="Replacement of protamines by nucleosomes in the male pronucleus"/>
</dbReference>
<dbReference type="Reactome" id="R-HSA-9841922">
    <property type="pathway name" value="MLL4 and MLL3 complexes regulate expression of PPARG target genes in adipogenesis and hepatic steatosis"/>
</dbReference>
<dbReference type="Reactome" id="R-HSA-9843940">
    <property type="pathway name" value="Regulation of endogenous retroelements by KRAB-ZFP proteins"/>
</dbReference>
<dbReference type="Reactome" id="R-HSA-9843970">
    <property type="pathway name" value="Regulation of endogenous retroelements by the Human Silencing Hub (HUSH) complex"/>
</dbReference>
<dbReference type="Reactome" id="R-HSA-9845323">
    <property type="pathway name" value="Regulation of endogenous retroelements by Piwi-interacting RNAs (piRNAs)"/>
</dbReference>
<dbReference type="SignaLink" id="P33778"/>
<dbReference type="SIGNOR" id="P33778"/>
<dbReference type="BioGRID-ORCS" id="3018">
    <property type="hits" value="530 hits in 1109 CRISPR screens"/>
</dbReference>
<dbReference type="CD-CODE" id="91857CE7">
    <property type="entry name" value="Nucleolus"/>
</dbReference>
<dbReference type="ChiTaRS" id="HIST1H2BB">
    <property type="organism name" value="human"/>
</dbReference>
<dbReference type="EvolutionaryTrace" id="P33778"/>
<dbReference type="GeneWiki" id="HIST1H2BB"/>
<dbReference type="GenomeRNAi" id="3018"/>
<dbReference type="Pharos" id="P33778">
    <property type="development level" value="Tbio"/>
</dbReference>
<dbReference type="PRO" id="PR:P33778"/>
<dbReference type="Proteomes" id="UP000005640">
    <property type="component" value="Chromosome 6"/>
</dbReference>
<dbReference type="RNAct" id="P33778">
    <property type="molecule type" value="protein"/>
</dbReference>
<dbReference type="Bgee" id="ENSG00000276410">
    <property type="expression patterns" value="Expressed in bone marrow cell and 74 other cell types or tissues"/>
</dbReference>
<dbReference type="GO" id="GO:0000781">
    <property type="term" value="C:chromosome, telomeric region"/>
    <property type="evidence" value="ECO:0007005"/>
    <property type="project" value="BHF-UCL"/>
</dbReference>
<dbReference type="GO" id="GO:0005829">
    <property type="term" value="C:cytosol"/>
    <property type="evidence" value="ECO:0000314"/>
    <property type="project" value="HPA"/>
</dbReference>
<dbReference type="GO" id="GO:0005654">
    <property type="term" value="C:nucleoplasm"/>
    <property type="evidence" value="ECO:0000314"/>
    <property type="project" value="HPA"/>
</dbReference>
<dbReference type="GO" id="GO:0000786">
    <property type="term" value="C:nucleosome"/>
    <property type="evidence" value="ECO:0000303"/>
    <property type="project" value="UniProtKB"/>
</dbReference>
<dbReference type="GO" id="GO:0005634">
    <property type="term" value="C:nucleus"/>
    <property type="evidence" value="ECO:0000314"/>
    <property type="project" value="UniProtKB"/>
</dbReference>
<dbReference type="GO" id="GO:0003677">
    <property type="term" value="F:DNA binding"/>
    <property type="evidence" value="ECO:0000303"/>
    <property type="project" value="UniProtKB"/>
</dbReference>
<dbReference type="GO" id="GO:0046982">
    <property type="term" value="F:protein heterodimerization activity"/>
    <property type="evidence" value="ECO:0007669"/>
    <property type="project" value="InterPro"/>
</dbReference>
<dbReference type="GO" id="GO:0030527">
    <property type="term" value="F:structural constituent of chromatin"/>
    <property type="evidence" value="ECO:0007669"/>
    <property type="project" value="InterPro"/>
</dbReference>
<dbReference type="GO" id="GO:0006334">
    <property type="term" value="P:nucleosome assembly"/>
    <property type="evidence" value="ECO:0000303"/>
    <property type="project" value="UniProtKB"/>
</dbReference>
<dbReference type="CDD" id="cd22910">
    <property type="entry name" value="HFD_H2B"/>
    <property type="match status" value="1"/>
</dbReference>
<dbReference type="FunFam" id="1.10.20.10:FF:000003">
    <property type="entry name" value="Histone H2B"/>
    <property type="match status" value="1"/>
</dbReference>
<dbReference type="Gene3D" id="1.10.20.10">
    <property type="entry name" value="Histone, subunit A"/>
    <property type="match status" value="1"/>
</dbReference>
<dbReference type="InterPro" id="IPR009072">
    <property type="entry name" value="Histone-fold"/>
</dbReference>
<dbReference type="InterPro" id="IPR007125">
    <property type="entry name" value="Histone_H2A/H2B/H3"/>
</dbReference>
<dbReference type="InterPro" id="IPR000558">
    <property type="entry name" value="Histone_H2B"/>
</dbReference>
<dbReference type="InterPro" id="IPR055333">
    <property type="entry name" value="HISTONE_H2B_site"/>
</dbReference>
<dbReference type="PANTHER" id="PTHR23428">
    <property type="entry name" value="HISTONE H2B"/>
    <property type="match status" value="1"/>
</dbReference>
<dbReference type="Pfam" id="PF00125">
    <property type="entry name" value="Histone"/>
    <property type="match status" value="1"/>
</dbReference>
<dbReference type="PRINTS" id="PR00621">
    <property type="entry name" value="HISTONEH2B"/>
</dbReference>
<dbReference type="SMART" id="SM00427">
    <property type="entry name" value="H2B"/>
    <property type="match status" value="1"/>
</dbReference>
<dbReference type="SUPFAM" id="SSF47113">
    <property type="entry name" value="Histone-fold"/>
    <property type="match status" value="1"/>
</dbReference>
<dbReference type="PROSITE" id="PS00357">
    <property type="entry name" value="HISTONE_H2B"/>
    <property type="match status" value="1"/>
</dbReference>
<accession>P33778</accession>
<accession>Q4KN36</accession>
<comment type="function">
    <text>Core component of nucleosome. Nucleosomes wrap and compact DNA into chromatin, limiting DNA accessibility to the cellular machineries which require DNA as a template. Histones thereby play a central role in transcription regulation, DNA repair, DNA replication and chromosomal stability. DNA accessibility is regulated via a complex set of post-translational modifications of histones, also called histone code, and nucleosome remodeling.</text>
</comment>
<comment type="subunit">
    <text>The nucleosome is a histone octamer containing two molecules each of H2A, H2B, H3 and H4 assembled in one H3-H4 heterotetramer and two H2A-H2B heterodimers. The octamer wraps approximately 147 bp of DNA.</text>
</comment>
<comment type="interaction">
    <interactant intactId="EBI-357986">
        <id>P33778</id>
    </interactant>
    <interactant intactId="EBI-17589229">
        <id>Q6NTF9-3</id>
        <label>RHBDD2</label>
    </interactant>
    <organismsDiffer>false</organismsDiffer>
    <experiments>3</experiments>
</comment>
<comment type="subcellular location">
    <subcellularLocation>
        <location>Nucleus</location>
    </subcellularLocation>
    <subcellularLocation>
        <location>Chromosome</location>
    </subcellularLocation>
</comment>
<comment type="PTM">
    <text evidence="10">Monoubiquitination at Lys-35 (H2BK34Ub) by the MSL1/MSL2 dimer is required for histone H3 'Lys-4' (H3K4me) and 'Lys-79' (H3K79me) methylation and transcription activation at specific gene loci, such as HOXA9 and MEIS1 loci. Similarly, monoubiquitination at Lys-121 (H2BK120Ub) by the RNF20/40 complex gives a specific tag for epigenetic transcriptional activation and is also prerequisite for histone H3 'Lys-4' and 'Lys-79' methylation. It also functions cooperatively with the FACT dimer to stimulate elongation by RNA polymerase II. H2BK120Ub also acts as a regulator of mRNA splicing: deubiquitination by USP49 is required for efficient cotranscriptional splicing of a large set of exons.</text>
</comment>
<comment type="PTM">
    <text evidence="6 11">Phosphorylation at Ser-37 (H2BS36ph) by AMPK in response to stress promotes transcription (By similarity). Phosphorylated on Ser-15 (H2BS14ph) by STK4/MST1 during apoptosis; which facilitates apoptotic chromatin condensation (PubMed:12757711). Also phosphorylated on Ser-15 in response to DNA double strand breaks (DSBs), and in correlation with somatic hypermutation and immunoglobulin class-switch recombination.</text>
</comment>
<comment type="PTM">
    <text evidence="3">GlcNAcylation at Ser-113 promotes monoubiquitination of Lys-121. It fluctuates in response to extracellular glucose, and associates with transcribed genes (By similarity).</text>
</comment>
<comment type="PTM">
    <text evidence="7 21 24">ADP-ribosylated by PARP1 or PARP2 on Ser-7 (H2BS6ADPr) in response to DNA damage (PubMed:34874266). H2BS6ADPr promotes recruitment of CHD1L (PubMed:34874266). Mono-ADP-ribosylated on Glu-3 (H2BE2ADPr) by PARP3 in response to single-strand breaks (PubMed:27530147). Poly ADP-ribosylation on Glu-36 (H2BE35ADPr) by PARP1 regulates adipogenesis: it inhibits phosphorylation at Ser-37 (H2BS36ph), thereby blocking expression of pro-adipogenetic genes (By similarity).</text>
</comment>
<comment type="PTM">
    <text evidence="16">Crotonylation (Kcr) is specifically present in male germ cells and marks testis-specific genes in post-meiotic cells, including X-linked genes that escape sex chromosome inactivation in haploid cells. Crotonylation marks active promoters and enhancers and confers resistance to transcriptional repressors. It is also associated with post-meiotically activated genes on autosomes.</text>
</comment>
<comment type="PTM">
    <text evidence="23">Lactylated in macrophages by EP300/P300 by using lactoyl-CoA directly derived from endogenous or exogenous lactate, leading to stimulates gene transcription.</text>
</comment>
<comment type="similarity">
    <text evidence="25">Belongs to the histone H2B family.</text>
</comment>
<sequence>MPEPSKSAPAPKKGSKKAITKAQKKDGKKRKRSRKESYSIYVYKVLKQVHPDTGISSKAMGIMNSFVNDIFERIAGEASRLAHYNKRSTITSREIQTAVRLLLPGELAKHAVSEGTKAVTKYTSSK</sequence>
<name>H2B1B_HUMAN</name>